<comment type="function">
    <text evidence="1">Transcription regulator that can specifically activate or repress expression of target genes.</text>
</comment>
<comment type="subunit">
    <text evidence="1">Homodimer.</text>
</comment>
<comment type="similarity">
    <text evidence="1">Belongs to the SlyA family.</text>
</comment>
<keyword id="KW-0010">Activator</keyword>
<keyword id="KW-0238">DNA-binding</keyword>
<keyword id="KW-0678">Repressor</keyword>
<keyword id="KW-0804">Transcription</keyword>
<keyword id="KW-0805">Transcription regulation</keyword>
<protein>
    <recommendedName>
        <fullName evidence="1">Transcriptional regulator SlyA</fullName>
    </recommendedName>
</protein>
<proteinExistence type="inferred from homology"/>
<dbReference type="EMBL" id="CP000668">
    <property type="protein sequence ID" value="ABP39178.1"/>
    <property type="molecule type" value="Genomic_DNA"/>
</dbReference>
<dbReference type="SMR" id="A4TIR6"/>
<dbReference type="KEGG" id="ypp:YPDSF_0772"/>
<dbReference type="PATRIC" id="fig|386656.14.peg.3091"/>
<dbReference type="GO" id="GO:0003677">
    <property type="term" value="F:DNA binding"/>
    <property type="evidence" value="ECO:0007669"/>
    <property type="project" value="UniProtKB-UniRule"/>
</dbReference>
<dbReference type="GO" id="GO:0003700">
    <property type="term" value="F:DNA-binding transcription factor activity"/>
    <property type="evidence" value="ECO:0007669"/>
    <property type="project" value="UniProtKB-UniRule"/>
</dbReference>
<dbReference type="GO" id="GO:0006950">
    <property type="term" value="P:response to stress"/>
    <property type="evidence" value="ECO:0007669"/>
    <property type="project" value="TreeGrafter"/>
</dbReference>
<dbReference type="FunFam" id="1.10.10.10:FF:000261">
    <property type="entry name" value="Transcriptional regulator SlyA"/>
    <property type="match status" value="1"/>
</dbReference>
<dbReference type="Gene3D" id="1.10.10.10">
    <property type="entry name" value="Winged helix-like DNA-binding domain superfamily/Winged helix DNA-binding domain"/>
    <property type="match status" value="1"/>
</dbReference>
<dbReference type="HAMAP" id="MF_01819">
    <property type="entry name" value="HTH_type_SlyA"/>
    <property type="match status" value="1"/>
</dbReference>
<dbReference type="InterPro" id="IPR000835">
    <property type="entry name" value="HTH_MarR-typ"/>
</dbReference>
<dbReference type="InterPro" id="IPR039422">
    <property type="entry name" value="MarR/SlyA-like"/>
</dbReference>
<dbReference type="InterPro" id="IPR023187">
    <property type="entry name" value="Tscrpt_reg_MarR-type_CS"/>
</dbReference>
<dbReference type="InterPro" id="IPR023071">
    <property type="entry name" value="Tscrpt_reg_SlyA"/>
</dbReference>
<dbReference type="InterPro" id="IPR036388">
    <property type="entry name" value="WH-like_DNA-bd_sf"/>
</dbReference>
<dbReference type="InterPro" id="IPR036390">
    <property type="entry name" value="WH_DNA-bd_sf"/>
</dbReference>
<dbReference type="NCBIfam" id="NF002926">
    <property type="entry name" value="PRK03573.1"/>
    <property type="match status" value="1"/>
</dbReference>
<dbReference type="PANTHER" id="PTHR33164:SF64">
    <property type="entry name" value="TRANSCRIPTIONAL REGULATOR SLYA"/>
    <property type="match status" value="1"/>
</dbReference>
<dbReference type="PANTHER" id="PTHR33164">
    <property type="entry name" value="TRANSCRIPTIONAL REGULATOR, MARR FAMILY"/>
    <property type="match status" value="1"/>
</dbReference>
<dbReference type="Pfam" id="PF01047">
    <property type="entry name" value="MarR"/>
    <property type="match status" value="1"/>
</dbReference>
<dbReference type="PRINTS" id="PR00598">
    <property type="entry name" value="HTHMARR"/>
</dbReference>
<dbReference type="SMART" id="SM00347">
    <property type="entry name" value="HTH_MARR"/>
    <property type="match status" value="1"/>
</dbReference>
<dbReference type="SUPFAM" id="SSF46785">
    <property type="entry name" value="Winged helix' DNA-binding domain"/>
    <property type="match status" value="1"/>
</dbReference>
<dbReference type="PROSITE" id="PS01117">
    <property type="entry name" value="HTH_MARR_1"/>
    <property type="match status" value="1"/>
</dbReference>
<dbReference type="PROSITE" id="PS50995">
    <property type="entry name" value="HTH_MARR_2"/>
    <property type="match status" value="1"/>
</dbReference>
<reference key="1">
    <citation type="submission" date="2007-02" db="EMBL/GenBank/DDBJ databases">
        <title>Complete sequence of chromosome of Yersinia pestis Pestoides F.</title>
        <authorList>
            <consortium name="US DOE Joint Genome Institute"/>
            <person name="Copeland A."/>
            <person name="Lucas S."/>
            <person name="Lapidus A."/>
            <person name="Barry K."/>
            <person name="Detter J.C."/>
            <person name="Glavina del Rio T."/>
            <person name="Hammon N."/>
            <person name="Israni S."/>
            <person name="Dalin E."/>
            <person name="Tice H."/>
            <person name="Pitluck S."/>
            <person name="Di Bartolo G."/>
            <person name="Chain P."/>
            <person name="Malfatti S."/>
            <person name="Shin M."/>
            <person name="Vergez L."/>
            <person name="Schmutz J."/>
            <person name="Larimer F."/>
            <person name="Land M."/>
            <person name="Hauser L."/>
            <person name="Worsham P."/>
            <person name="Chu M."/>
            <person name="Bearden S."/>
            <person name="Garcia E."/>
            <person name="Richardson P."/>
        </authorList>
    </citation>
    <scope>NUCLEOTIDE SEQUENCE [LARGE SCALE GENOMIC DNA]</scope>
    <source>
        <strain>Pestoides F</strain>
    </source>
</reference>
<organism>
    <name type="scientific">Yersinia pestis (strain Pestoides F)</name>
    <dbReference type="NCBI Taxonomy" id="386656"/>
    <lineage>
        <taxon>Bacteria</taxon>
        <taxon>Pseudomonadati</taxon>
        <taxon>Pseudomonadota</taxon>
        <taxon>Gammaproteobacteria</taxon>
        <taxon>Enterobacterales</taxon>
        <taxon>Yersiniaceae</taxon>
        <taxon>Yersinia</taxon>
    </lineage>
</organism>
<accession>A4TIR6</accession>
<evidence type="ECO:0000255" key="1">
    <source>
        <dbReference type="HAMAP-Rule" id="MF_01819"/>
    </source>
</evidence>
<name>SLYA_YERPP</name>
<sequence>MESTLGSDLARLVRVWRALIDHRLKPLELTQTHWVTLYNINRLPPEQSQIQLAKAIGIEQPSLVRTLDQLEEKGLITRHTCANDRRAKRIKLTEQSSPIIEQVDGVICSTRKEILGGISSDEIAVLSGLIDKLEKNIIQLQTK</sequence>
<feature type="chain" id="PRO_1000070361" description="Transcriptional regulator SlyA">
    <location>
        <begin position="1"/>
        <end position="143"/>
    </location>
</feature>
<feature type="domain" description="HTH marR-type" evidence="1">
    <location>
        <begin position="2"/>
        <end position="135"/>
    </location>
</feature>
<feature type="DNA-binding region" description="H-T-H motif" evidence="1">
    <location>
        <begin position="49"/>
        <end position="72"/>
    </location>
</feature>
<gene>
    <name evidence="1" type="primary">slyA</name>
    <name type="ordered locus">YPDSF_0772</name>
</gene>